<protein>
    <recommendedName>
        <fullName>Protein ROT1</fullName>
    </recommendedName>
    <alternativeName>
        <fullName>Reversal of TOR2 lethality protein 1</fullName>
    </alternativeName>
</protein>
<feature type="signal peptide" evidence="2">
    <location>
        <begin position="1"/>
        <end position="24"/>
    </location>
</feature>
<feature type="chain" id="PRO_0000333420" description="Protein ROT1">
    <location>
        <begin position="25"/>
        <end position="256"/>
    </location>
</feature>
<feature type="topological domain" description="Lumenal" evidence="2">
    <location>
        <begin position="25"/>
        <end position="235"/>
    </location>
</feature>
<feature type="transmembrane region" description="Helical" evidence="2">
    <location>
        <begin position="236"/>
        <end position="256"/>
    </location>
</feature>
<feature type="region of interest" description="Disordered" evidence="3">
    <location>
        <begin position="186"/>
        <end position="213"/>
    </location>
</feature>
<feature type="compositionally biased region" description="Low complexity" evidence="3">
    <location>
        <begin position="191"/>
        <end position="200"/>
    </location>
</feature>
<feature type="compositionally biased region" description="Basic residues" evidence="3">
    <location>
        <begin position="203"/>
        <end position="212"/>
    </location>
</feature>
<feature type="glycosylation site" description="N-linked (GlcNAc...) asparagine" evidence="2">
    <location>
        <position position="103"/>
    </location>
</feature>
<feature type="glycosylation site" description="N-linked (GlcNAc...) asparagine" evidence="2">
    <location>
        <position position="107"/>
    </location>
</feature>
<feature type="glycosylation site" description="N-linked (GlcNAc...) asparagine" evidence="2">
    <location>
        <position position="139"/>
    </location>
</feature>
<feature type="glycosylation site" description="N-linked (GlcNAc...) asparagine" evidence="2">
    <location>
        <position position="229"/>
    </location>
</feature>
<accession>A6ZMR2</accession>
<dbReference type="EMBL" id="AAFW02000021">
    <property type="protein sequence ID" value="EDN64136.1"/>
    <property type="molecule type" value="Genomic_DNA"/>
</dbReference>
<dbReference type="GlyCosmos" id="A6ZMR2">
    <property type="glycosylation" value="4 sites, No reported glycans"/>
</dbReference>
<dbReference type="HOGENOM" id="CLU_071622_0_0_1"/>
<dbReference type="Proteomes" id="UP000007060">
    <property type="component" value="Unassembled WGS sequence"/>
</dbReference>
<dbReference type="GO" id="GO:0005789">
    <property type="term" value="C:endoplasmic reticulum membrane"/>
    <property type="evidence" value="ECO:0007669"/>
    <property type="project" value="UniProtKB-SubCell"/>
</dbReference>
<dbReference type="GO" id="GO:0051082">
    <property type="term" value="F:unfolded protein binding"/>
    <property type="evidence" value="ECO:0007669"/>
    <property type="project" value="TreeGrafter"/>
</dbReference>
<dbReference type="GO" id="GO:0006458">
    <property type="term" value="P:'de novo' protein folding"/>
    <property type="evidence" value="ECO:0007669"/>
    <property type="project" value="InterPro"/>
</dbReference>
<dbReference type="GO" id="GO:0007118">
    <property type="term" value="P:budding cell apical bud growth"/>
    <property type="evidence" value="ECO:0007669"/>
    <property type="project" value="TreeGrafter"/>
</dbReference>
<dbReference type="InterPro" id="IPR019623">
    <property type="entry name" value="Rot1"/>
</dbReference>
<dbReference type="PANTHER" id="PTHR28090">
    <property type="entry name" value="PROTEIN ROT1"/>
    <property type="match status" value="1"/>
</dbReference>
<dbReference type="PANTHER" id="PTHR28090:SF1">
    <property type="entry name" value="PROTEIN ROT1"/>
    <property type="match status" value="1"/>
</dbReference>
<dbReference type="Pfam" id="PF10681">
    <property type="entry name" value="Rot1"/>
    <property type="match status" value="1"/>
</dbReference>
<dbReference type="PIRSF" id="PIRSF017290">
    <property type="entry name" value="ROT1_prd"/>
    <property type="match status" value="1"/>
</dbReference>
<reference key="1">
    <citation type="journal article" date="2007" name="Proc. Natl. Acad. Sci. U.S.A.">
        <title>Genome sequencing and comparative analysis of Saccharomyces cerevisiae strain YJM789.</title>
        <authorList>
            <person name="Wei W."/>
            <person name="McCusker J.H."/>
            <person name="Hyman R.W."/>
            <person name="Jones T."/>
            <person name="Ning Y."/>
            <person name="Cao Z."/>
            <person name="Gu Z."/>
            <person name="Bruno D."/>
            <person name="Miranda M."/>
            <person name="Nguyen M."/>
            <person name="Wilhelmy J."/>
            <person name="Komp C."/>
            <person name="Tamse R."/>
            <person name="Wang X."/>
            <person name="Jia P."/>
            <person name="Luedi P."/>
            <person name="Oefner P.J."/>
            <person name="David L."/>
            <person name="Dietrich F.S."/>
            <person name="Li Y."/>
            <person name="Davis R.W."/>
            <person name="Steinmetz L.M."/>
        </authorList>
    </citation>
    <scope>NUCLEOTIDE SEQUENCE [LARGE SCALE GENOMIC DNA]</scope>
    <source>
        <strain>YJM789</strain>
    </source>
</reference>
<organism>
    <name type="scientific">Saccharomyces cerevisiae (strain YJM789)</name>
    <name type="common">Baker's yeast</name>
    <dbReference type="NCBI Taxonomy" id="307796"/>
    <lineage>
        <taxon>Eukaryota</taxon>
        <taxon>Fungi</taxon>
        <taxon>Dikarya</taxon>
        <taxon>Ascomycota</taxon>
        <taxon>Saccharomycotina</taxon>
        <taxon>Saccharomycetes</taxon>
        <taxon>Saccharomycetales</taxon>
        <taxon>Saccharomycetaceae</taxon>
        <taxon>Saccharomyces</taxon>
    </lineage>
</organism>
<gene>
    <name type="primary">ROT1</name>
    <name type="ORF">SCY_4378</name>
</gene>
<keyword id="KW-0256">Endoplasmic reticulum</keyword>
<keyword id="KW-0325">Glycoprotein</keyword>
<keyword id="KW-0472">Membrane</keyword>
<keyword id="KW-0732">Signal</keyword>
<keyword id="KW-0812">Transmembrane</keyword>
<keyword id="KW-1133">Transmembrane helix</keyword>
<sequence length="256" mass="28898">MWSKKFTLKKLILGGYLFAQKVYCEDESNSIYGTWSSKSNQVFTGPGFYDPVDELLIEPSLPGLSYSFTEDGWYEEATYQVSGNPRNPTCPMASLIYQHGTYNISENGTLVLNPIEVDGRQLFSDPCNDDGVSTYSRYNQTETFKEYAVGIDPYHGIYTLQLYQYDGTPMQPLYLAYRPPMMLPTETLNPTSSATSTDDSSSNKKRSLRSLVRRSLENRHKTNAIKRQNTSFLTSNAIWYISAGMLGVGSLLFLAF</sequence>
<comment type="function">
    <text evidence="1">Required for normal levels of the cell wall 1,6-beta-glucan. Involved in a protein folding machinery chaperoning proteins acting in various physiological processes including cell wall synthesis and lysis of autophagic bodies. Controls actin cytoskeleton polarization to the mother-bud neck and CLB2 protein stability (By similarity).</text>
</comment>
<comment type="subcellular location">
    <subcellularLocation>
        <location evidence="1">Endoplasmic reticulum membrane</location>
        <topology evidence="1">Single-pass type I membrane protein</topology>
    </subcellularLocation>
</comment>
<comment type="similarity">
    <text evidence="4">Belongs to the ROT1 family.</text>
</comment>
<name>ROT1_YEAS7</name>
<proteinExistence type="inferred from homology"/>
<evidence type="ECO:0000250" key="1"/>
<evidence type="ECO:0000255" key="2"/>
<evidence type="ECO:0000256" key="3">
    <source>
        <dbReference type="SAM" id="MobiDB-lite"/>
    </source>
</evidence>
<evidence type="ECO:0000305" key="4"/>